<organism>
    <name type="scientific">Yersinia pestis</name>
    <dbReference type="NCBI Taxonomy" id="632"/>
    <lineage>
        <taxon>Bacteria</taxon>
        <taxon>Pseudomonadati</taxon>
        <taxon>Pseudomonadota</taxon>
        <taxon>Gammaproteobacteria</taxon>
        <taxon>Enterobacterales</taxon>
        <taxon>Yersiniaceae</taxon>
        <taxon>Yersinia</taxon>
    </lineage>
</organism>
<evidence type="ECO:0000255" key="1">
    <source>
        <dbReference type="HAMAP-Rule" id="MF_00276"/>
    </source>
</evidence>
<evidence type="ECO:0000305" key="2"/>
<proteinExistence type="inferred from homology"/>
<accession>Q8ZD98</accession>
<accession>Q0WDK0</accession>
<name>KDPC_YERPE</name>
<keyword id="KW-0067">ATP-binding</keyword>
<keyword id="KW-0997">Cell inner membrane</keyword>
<keyword id="KW-1003">Cell membrane</keyword>
<keyword id="KW-0406">Ion transport</keyword>
<keyword id="KW-0472">Membrane</keyword>
<keyword id="KW-0547">Nucleotide-binding</keyword>
<keyword id="KW-0630">Potassium</keyword>
<keyword id="KW-0633">Potassium transport</keyword>
<keyword id="KW-1185">Reference proteome</keyword>
<keyword id="KW-0812">Transmembrane</keyword>
<keyword id="KW-1133">Transmembrane helix</keyword>
<keyword id="KW-0813">Transport</keyword>
<dbReference type="EMBL" id="AL590842">
    <property type="protein sequence ID" value="CAL21309.1"/>
    <property type="molecule type" value="Genomic_DNA"/>
</dbReference>
<dbReference type="EMBL" id="AE009952">
    <property type="protein sequence ID" value="AAM84837.1"/>
    <property type="molecule type" value="Genomic_DNA"/>
</dbReference>
<dbReference type="EMBL" id="AE017042">
    <property type="protein sequence ID" value="AAS62692.1"/>
    <property type="status" value="ALT_INIT"/>
    <property type="molecule type" value="Genomic_DNA"/>
</dbReference>
<dbReference type="PIR" id="AB0328">
    <property type="entry name" value="AB0328"/>
</dbReference>
<dbReference type="RefSeq" id="WP_002216363.1">
    <property type="nucleotide sequence ID" value="NZ_WUCM01000006.1"/>
</dbReference>
<dbReference type="RefSeq" id="YP_002347638.1">
    <property type="nucleotide sequence ID" value="NC_003143.1"/>
</dbReference>
<dbReference type="SMR" id="Q8ZD98"/>
<dbReference type="STRING" id="214092.YPO2690"/>
<dbReference type="PaxDb" id="214092-YPO2690"/>
<dbReference type="DNASU" id="1146210"/>
<dbReference type="EnsemblBacteria" id="AAS62692">
    <property type="protein sequence ID" value="AAS62692"/>
    <property type="gene ID" value="YP_2493"/>
</dbReference>
<dbReference type="GeneID" id="57976003"/>
<dbReference type="KEGG" id="ype:YPO2690"/>
<dbReference type="KEGG" id="ypj:CH55_1479"/>
<dbReference type="KEGG" id="ypk:y1263"/>
<dbReference type="KEGG" id="ypl:CH46_2417"/>
<dbReference type="KEGG" id="ypm:YP_2493"/>
<dbReference type="KEGG" id="ypv:BZ15_841"/>
<dbReference type="KEGG" id="ypw:CH59_3572"/>
<dbReference type="PATRIC" id="fig|214092.21.peg.3127"/>
<dbReference type="eggNOG" id="COG2156">
    <property type="taxonomic scope" value="Bacteria"/>
</dbReference>
<dbReference type="HOGENOM" id="CLU_077094_2_0_6"/>
<dbReference type="OMA" id="KYFWPRP"/>
<dbReference type="OrthoDB" id="9788285at2"/>
<dbReference type="Proteomes" id="UP000000815">
    <property type="component" value="Chromosome"/>
</dbReference>
<dbReference type="Proteomes" id="UP000001019">
    <property type="component" value="Chromosome"/>
</dbReference>
<dbReference type="Proteomes" id="UP000002490">
    <property type="component" value="Chromosome"/>
</dbReference>
<dbReference type="GO" id="GO:0005886">
    <property type="term" value="C:plasma membrane"/>
    <property type="evidence" value="ECO:0007669"/>
    <property type="project" value="UniProtKB-SubCell"/>
</dbReference>
<dbReference type="GO" id="GO:0005524">
    <property type="term" value="F:ATP binding"/>
    <property type="evidence" value="ECO:0007669"/>
    <property type="project" value="UniProtKB-UniRule"/>
</dbReference>
<dbReference type="GO" id="GO:0008556">
    <property type="term" value="F:P-type potassium transmembrane transporter activity"/>
    <property type="evidence" value="ECO:0000318"/>
    <property type="project" value="GO_Central"/>
</dbReference>
<dbReference type="GO" id="GO:0071805">
    <property type="term" value="P:potassium ion transmembrane transport"/>
    <property type="evidence" value="ECO:0000318"/>
    <property type="project" value="GO_Central"/>
</dbReference>
<dbReference type="HAMAP" id="MF_00276">
    <property type="entry name" value="KdpC"/>
    <property type="match status" value="1"/>
</dbReference>
<dbReference type="InterPro" id="IPR003820">
    <property type="entry name" value="KdpC"/>
</dbReference>
<dbReference type="NCBIfam" id="TIGR00681">
    <property type="entry name" value="kdpC"/>
    <property type="match status" value="1"/>
</dbReference>
<dbReference type="NCBIfam" id="NF001454">
    <property type="entry name" value="PRK00315.1"/>
    <property type="match status" value="1"/>
</dbReference>
<dbReference type="PANTHER" id="PTHR30042">
    <property type="entry name" value="POTASSIUM-TRANSPORTING ATPASE C CHAIN"/>
    <property type="match status" value="1"/>
</dbReference>
<dbReference type="PANTHER" id="PTHR30042:SF2">
    <property type="entry name" value="POTASSIUM-TRANSPORTING ATPASE KDPC SUBUNIT"/>
    <property type="match status" value="1"/>
</dbReference>
<dbReference type="Pfam" id="PF02669">
    <property type="entry name" value="KdpC"/>
    <property type="match status" value="1"/>
</dbReference>
<dbReference type="PIRSF" id="PIRSF001296">
    <property type="entry name" value="K_ATPase_KdpC"/>
    <property type="match status" value="1"/>
</dbReference>
<comment type="function">
    <text evidence="1">Part of the high-affinity ATP-driven potassium transport (or Kdp) system, which catalyzes the hydrolysis of ATP coupled with the electrogenic transport of potassium into the cytoplasm. This subunit acts as a catalytic chaperone that increases the ATP-binding affinity of the ATP-hydrolyzing subunit KdpB by the formation of a transient KdpB/KdpC/ATP ternary complex.</text>
</comment>
<comment type="subunit">
    <text evidence="1">The system is composed of three essential subunits: KdpA, KdpB and KdpC.</text>
</comment>
<comment type="subcellular location">
    <subcellularLocation>
        <location evidence="1">Cell inner membrane</location>
        <topology evidence="1">Single-pass membrane protein</topology>
    </subcellularLocation>
</comment>
<comment type="similarity">
    <text evidence="1">Belongs to the KdpC family.</text>
</comment>
<comment type="sequence caution" evidence="2">
    <conflict type="erroneous initiation">
        <sequence resource="EMBL-CDS" id="AAS62692"/>
    </conflict>
</comment>
<protein>
    <recommendedName>
        <fullName evidence="1">Potassium-transporting ATPase KdpC subunit</fullName>
    </recommendedName>
    <alternativeName>
        <fullName evidence="1">ATP phosphohydrolase [potassium-transporting] C chain</fullName>
    </alternativeName>
    <alternativeName>
        <fullName evidence="1">Potassium-binding and translocating subunit C</fullName>
    </alternativeName>
    <alternativeName>
        <fullName evidence="1">Potassium-translocating ATPase C chain</fullName>
    </alternativeName>
</protein>
<reference key="1">
    <citation type="journal article" date="2001" name="Nature">
        <title>Genome sequence of Yersinia pestis, the causative agent of plague.</title>
        <authorList>
            <person name="Parkhill J."/>
            <person name="Wren B.W."/>
            <person name="Thomson N.R."/>
            <person name="Titball R.W."/>
            <person name="Holden M.T.G."/>
            <person name="Prentice M.B."/>
            <person name="Sebaihia M."/>
            <person name="James K.D."/>
            <person name="Churcher C.M."/>
            <person name="Mungall K.L."/>
            <person name="Baker S."/>
            <person name="Basham D."/>
            <person name="Bentley S.D."/>
            <person name="Brooks K."/>
            <person name="Cerdeno-Tarraga A.-M."/>
            <person name="Chillingworth T."/>
            <person name="Cronin A."/>
            <person name="Davies R.M."/>
            <person name="Davis P."/>
            <person name="Dougan G."/>
            <person name="Feltwell T."/>
            <person name="Hamlin N."/>
            <person name="Holroyd S."/>
            <person name="Jagels K."/>
            <person name="Karlyshev A.V."/>
            <person name="Leather S."/>
            <person name="Moule S."/>
            <person name="Oyston P.C.F."/>
            <person name="Quail M.A."/>
            <person name="Rutherford K.M."/>
            <person name="Simmonds M."/>
            <person name="Skelton J."/>
            <person name="Stevens K."/>
            <person name="Whitehead S."/>
            <person name="Barrell B.G."/>
        </authorList>
    </citation>
    <scope>NUCLEOTIDE SEQUENCE [LARGE SCALE GENOMIC DNA]</scope>
    <source>
        <strain>CO-92 / Biovar Orientalis</strain>
    </source>
</reference>
<reference key="2">
    <citation type="journal article" date="2002" name="J. Bacteriol.">
        <title>Genome sequence of Yersinia pestis KIM.</title>
        <authorList>
            <person name="Deng W."/>
            <person name="Burland V."/>
            <person name="Plunkett G. III"/>
            <person name="Boutin A."/>
            <person name="Mayhew G.F."/>
            <person name="Liss P."/>
            <person name="Perna N.T."/>
            <person name="Rose D.J."/>
            <person name="Mau B."/>
            <person name="Zhou S."/>
            <person name="Schwartz D.C."/>
            <person name="Fetherston J.D."/>
            <person name="Lindler L.E."/>
            <person name="Brubaker R.R."/>
            <person name="Plano G.V."/>
            <person name="Straley S.C."/>
            <person name="McDonough K.A."/>
            <person name="Nilles M.L."/>
            <person name="Matson J.S."/>
            <person name="Blattner F.R."/>
            <person name="Perry R.D."/>
        </authorList>
    </citation>
    <scope>NUCLEOTIDE SEQUENCE [LARGE SCALE GENOMIC DNA]</scope>
    <source>
        <strain>KIM10+ / Biovar Mediaevalis</strain>
    </source>
</reference>
<reference key="3">
    <citation type="journal article" date="2004" name="DNA Res.">
        <title>Complete genome sequence of Yersinia pestis strain 91001, an isolate avirulent to humans.</title>
        <authorList>
            <person name="Song Y."/>
            <person name="Tong Z."/>
            <person name="Wang J."/>
            <person name="Wang L."/>
            <person name="Guo Z."/>
            <person name="Han Y."/>
            <person name="Zhang J."/>
            <person name="Pei D."/>
            <person name="Zhou D."/>
            <person name="Qin H."/>
            <person name="Pang X."/>
            <person name="Han Y."/>
            <person name="Zhai J."/>
            <person name="Li M."/>
            <person name="Cui B."/>
            <person name="Qi Z."/>
            <person name="Jin L."/>
            <person name="Dai R."/>
            <person name="Chen F."/>
            <person name="Li S."/>
            <person name="Ye C."/>
            <person name="Du Z."/>
            <person name="Lin W."/>
            <person name="Wang J."/>
            <person name="Yu J."/>
            <person name="Yang H."/>
            <person name="Wang J."/>
            <person name="Huang P."/>
            <person name="Yang R."/>
        </authorList>
    </citation>
    <scope>NUCLEOTIDE SEQUENCE [LARGE SCALE GENOMIC DNA]</scope>
    <source>
        <strain>91001 / Biovar Mediaevalis</strain>
    </source>
</reference>
<gene>
    <name evidence="1" type="primary">kdpC</name>
    <name type="ordered locus">YPO2690</name>
    <name type="ordered locus">y1263</name>
    <name type="ordered locus">YP_2493</name>
</gene>
<sequence length="200" mass="21068">MSYLRPALVLLILLTLITGIAYPLLTTGLAHLMFSQQASGSLARLGDNVVGSTLIGQNFTQPGYFTGRPSATADRPYNPMASGGSNLASSNPALGQAIGERVKLQRQANPTQLGPVPVDLVTASGSGLDPHISLAAAYYQAPRIASIRQMPLSDVQQLIDNSMQKAIPSFFGEPVVNVLNLNMALDSHSHVKVPANPAKP</sequence>
<feature type="chain" id="PRO_0000197024" description="Potassium-transporting ATPase KdpC subunit">
    <location>
        <begin position="1"/>
        <end position="200"/>
    </location>
</feature>
<feature type="transmembrane region" description="Helical" evidence="1">
    <location>
        <begin position="6"/>
        <end position="26"/>
    </location>
</feature>